<proteinExistence type="inferred from homology"/>
<evidence type="ECO:0000255" key="1">
    <source>
        <dbReference type="HAMAP-Rule" id="MF_00106"/>
    </source>
</evidence>
<evidence type="ECO:0000256" key="2">
    <source>
        <dbReference type="SAM" id="MobiDB-lite"/>
    </source>
</evidence>
<sequence>MEQTWRWYGPNDPVSLDDVRQAGATGVVTALHHIPNGEIWSIEEIEKRKAELKAKGLVWSVVESVPVHEEIKTQTGNYQQHIANYQQSLRNLAQCGIDTVCYNFMPVLDWTRTDLEYVLPDGSKALRFDHIAFAAFELHILKRHGAENDYTADEQAQAADYFRAMSEEEIARLTGNIIAGLPGSEEGYTLEQFRSRLAEYDGIDHAKLREHLGHFLREIVPVAEAAGIRLAIHPDDPPRPILGLPRVMSTIDDMRWLKQTVDSLHNGFTFCTGSYGVRADNDLVTMLETFADRVHFTHLRATCREDNPNSFHEGAHLQGDVDMVAIINAILAEELRRQKAGDRRPIPMRPDHGHQMLDDLKKKTNPGYSAIGRLKGLAELRGVELALKRTLFTELQQG</sequence>
<comment type="function">
    <text evidence="1">Catalyzes the dehydration of D-mannonate.</text>
</comment>
<comment type="catalytic activity">
    <reaction evidence="1">
        <text>D-mannonate = 2-dehydro-3-deoxy-D-gluconate + H2O</text>
        <dbReference type="Rhea" id="RHEA:20097"/>
        <dbReference type="ChEBI" id="CHEBI:15377"/>
        <dbReference type="ChEBI" id="CHEBI:17767"/>
        <dbReference type="ChEBI" id="CHEBI:57990"/>
        <dbReference type="EC" id="4.2.1.8"/>
    </reaction>
</comment>
<comment type="cofactor">
    <cofactor evidence="1">
        <name>Fe(2+)</name>
        <dbReference type="ChEBI" id="CHEBI:29033"/>
    </cofactor>
    <cofactor evidence="1">
        <name>Mn(2+)</name>
        <dbReference type="ChEBI" id="CHEBI:29035"/>
    </cofactor>
</comment>
<comment type="pathway">
    <text evidence="1">Carbohydrate metabolism; pentose and glucuronate interconversion.</text>
</comment>
<comment type="similarity">
    <text evidence="1">Belongs to the mannonate dehydratase family.</text>
</comment>
<accession>C6DAZ5</accession>
<dbReference type="EC" id="4.2.1.8" evidence="1"/>
<dbReference type="EMBL" id="CP001657">
    <property type="protein sequence ID" value="ACT12037.1"/>
    <property type="molecule type" value="Genomic_DNA"/>
</dbReference>
<dbReference type="RefSeq" id="WP_012773673.1">
    <property type="nucleotide sequence ID" value="NC_012917.1"/>
</dbReference>
<dbReference type="SMR" id="C6DAZ5"/>
<dbReference type="STRING" id="561230.PC1_0987"/>
<dbReference type="KEGG" id="pct:PC1_0987"/>
<dbReference type="eggNOG" id="COG1312">
    <property type="taxonomic scope" value="Bacteria"/>
</dbReference>
<dbReference type="HOGENOM" id="CLU_058621_2_0_6"/>
<dbReference type="OrthoDB" id="9780250at2"/>
<dbReference type="UniPathway" id="UPA00246"/>
<dbReference type="Proteomes" id="UP000002736">
    <property type="component" value="Chromosome"/>
</dbReference>
<dbReference type="GO" id="GO:0008198">
    <property type="term" value="F:ferrous iron binding"/>
    <property type="evidence" value="ECO:0007669"/>
    <property type="project" value="TreeGrafter"/>
</dbReference>
<dbReference type="GO" id="GO:0030145">
    <property type="term" value="F:manganese ion binding"/>
    <property type="evidence" value="ECO:0007669"/>
    <property type="project" value="TreeGrafter"/>
</dbReference>
<dbReference type="GO" id="GO:0008927">
    <property type="term" value="F:mannonate dehydratase activity"/>
    <property type="evidence" value="ECO:0007669"/>
    <property type="project" value="UniProtKB-UniRule"/>
</dbReference>
<dbReference type="GO" id="GO:0042840">
    <property type="term" value="P:D-glucuronate catabolic process"/>
    <property type="evidence" value="ECO:0007669"/>
    <property type="project" value="TreeGrafter"/>
</dbReference>
<dbReference type="FunFam" id="3.20.20.150:FF:000010">
    <property type="entry name" value="Mannonate dehydratase"/>
    <property type="match status" value="1"/>
</dbReference>
<dbReference type="Gene3D" id="3.20.20.150">
    <property type="entry name" value="Divalent-metal-dependent TIM barrel enzymes"/>
    <property type="match status" value="2"/>
</dbReference>
<dbReference type="HAMAP" id="MF_00106">
    <property type="entry name" value="UxuA"/>
    <property type="match status" value="1"/>
</dbReference>
<dbReference type="InterPro" id="IPR004628">
    <property type="entry name" value="Man_deHydtase"/>
</dbReference>
<dbReference type="InterPro" id="IPR036237">
    <property type="entry name" value="Xyl_isomerase-like_sf"/>
</dbReference>
<dbReference type="NCBIfam" id="NF003027">
    <property type="entry name" value="PRK03906.1"/>
    <property type="match status" value="1"/>
</dbReference>
<dbReference type="NCBIfam" id="TIGR00695">
    <property type="entry name" value="uxuA"/>
    <property type="match status" value="1"/>
</dbReference>
<dbReference type="PANTHER" id="PTHR30387">
    <property type="entry name" value="MANNONATE DEHYDRATASE"/>
    <property type="match status" value="1"/>
</dbReference>
<dbReference type="PANTHER" id="PTHR30387:SF2">
    <property type="entry name" value="MANNONATE DEHYDRATASE"/>
    <property type="match status" value="1"/>
</dbReference>
<dbReference type="Pfam" id="PF03786">
    <property type="entry name" value="UxuA"/>
    <property type="match status" value="1"/>
</dbReference>
<dbReference type="PIRSF" id="PIRSF016049">
    <property type="entry name" value="Man_dehyd"/>
    <property type="match status" value="1"/>
</dbReference>
<dbReference type="SUPFAM" id="SSF51658">
    <property type="entry name" value="Xylose isomerase-like"/>
    <property type="match status" value="1"/>
</dbReference>
<feature type="chain" id="PRO_1000202870" description="Mannonate dehydratase">
    <location>
        <begin position="1"/>
        <end position="398"/>
    </location>
</feature>
<feature type="region of interest" description="Disordered" evidence="2">
    <location>
        <begin position="342"/>
        <end position="362"/>
    </location>
</feature>
<organism>
    <name type="scientific">Pectobacterium carotovorum subsp. carotovorum (strain PC1)</name>
    <dbReference type="NCBI Taxonomy" id="561230"/>
    <lineage>
        <taxon>Bacteria</taxon>
        <taxon>Pseudomonadati</taxon>
        <taxon>Pseudomonadota</taxon>
        <taxon>Gammaproteobacteria</taxon>
        <taxon>Enterobacterales</taxon>
        <taxon>Pectobacteriaceae</taxon>
        <taxon>Pectobacterium</taxon>
    </lineage>
</organism>
<reference key="1">
    <citation type="submission" date="2009-07" db="EMBL/GenBank/DDBJ databases">
        <title>Complete sequence of Pectobacterium carotovorum subsp. carotovorum PC1.</title>
        <authorList>
            <consortium name="US DOE Joint Genome Institute"/>
            <person name="Lucas S."/>
            <person name="Copeland A."/>
            <person name="Lapidus A."/>
            <person name="Glavina del Rio T."/>
            <person name="Tice H."/>
            <person name="Bruce D."/>
            <person name="Goodwin L."/>
            <person name="Pitluck S."/>
            <person name="Munk A.C."/>
            <person name="Brettin T."/>
            <person name="Detter J.C."/>
            <person name="Han C."/>
            <person name="Tapia R."/>
            <person name="Larimer F."/>
            <person name="Land M."/>
            <person name="Hauser L."/>
            <person name="Kyrpides N."/>
            <person name="Mikhailova N."/>
            <person name="Balakrishnan V."/>
            <person name="Glasner J."/>
            <person name="Perna N.T."/>
        </authorList>
    </citation>
    <scope>NUCLEOTIDE SEQUENCE [LARGE SCALE GENOMIC DNA]</scope>
    <source>
        <strain>PC1</strain>
    </source>
</reference>
<name>UXUA_PECCP</name>
<gene>
    <name evidence="1" type="primary">uxuA</name>
    <name type="ordered locus">PC1_0987</name>
</gene>
<keyword id="KW-0408">Iron</keyword>
<keyword id="KW-0456">Lyase</keyword>
<keyword id="KW-0464">Manganese</keyword>
<protein>
    <recommendedName>
        <fullName evidence="1">Mannonate dehydratase</fullName>
        <ecNumber evidence="1">4.2.1.8</ecNumber>
    </recommendedName>
    <alternativeName>
        <fullName evidence="1">D-mannonate hydro-lyase</fullName>
    </alternativeName>
</protein>